<gene>
    <name type="ORF">DDB_G0274705</name>
</gene>
<reference key="1">
    <citation type="journal article" date="2002" name="Nature">
        <title>Sequence and analysis of chromosome 2 of Dictyostelium discoideum.</title>
        <authorList>
            <person name="Gloeckner G."/>
            <person name="Eichinger L."/>
            <person name="Szafranski K."/>
            <person name="Pachebat J.A."/>
            <person name="Bankier A.T."/>
            <person name="Dear P.H."/>
            <person name="Lehmann R."/>
            <person name="Baumgart C."/>
            <person name="Parra G."/>
            <person name="Abril J.F."/>
            <person name="Guigo R."/>
            <person name="Kumpf K."/>
            <person name="Tunggal B."/>
            <person name="Cox E.C."/>
            <person name="Quail M.A."/>
            <person name="Platzer M."/>
            <person name="Rosenthal A."/>
            <person name="Noegel A.A."/>
        </authorList>
    </citation>
    <scope>NUCLEOTIDE SEQUENCE [LARGE SCALE GENOMIC DNA]</scope>
    <source>
        <strain>AX4</strain>
    </source>
</reference>
<reference key="2">
    <citation type="journal article" date="2005" name="Nature">
        <title>The genome of the social amoeba Dictyostelium discoideum.</title>
        <authorList>
            <person name="Eichinger L."/>
            <person name="Pachebat J.A."/>
            <person name="Gloeckner G."/>
            <person name="Rajandream M.A."/>
            <person name="Sucgang R."/>
            <person name="Berriman M."/>
            <person name="Song J."/>
            <person name="Olsen R."/>
            <person name="Szafranski K."/>
            <person name="Xu Q."/>
            <person name="Tunggal B."/>
            <person name="Kummerfeld S."/>
            <person name="Madera M."/>
            <person name="Konfortov B.A."/>
            <person name="Rivero F."/>
            <person name="Bankier A.T."/>
            <person name="Lehmann R."/>
            <person name="Hamlin N."/>
            <person name="Davies R."/>
            <person name="Gaudet P."/>
            <person name="Fey P."/>
            <person name="Pilcher K."/>
            <person name="Chen G."/>
            <person name="Saunders D."/>
            <person name="Sodergren E.J."/>
            <person name="Davis P."/>
            <person name="Kerhornou A."/>
            <person name="Nie X."/>
            <person name="Hall N."/>
            <person name="Anjard C."/>
            <person name="Hemphill L."/>
            <person name="Bason N."/>
            <person name="Farbrother P."/>
            <person name="Desany B."/>
            <person name="Just E."/>
            <person name="Morio T."/>
            <person name="Rost R."/>
            <person name="Churcher C.M."/>
            <person name="Cooper J."/>
            <person name="Haydock S."/>
            <person name="van Driessche N."/>
            <person name="Cronin A."/>
            <person name="Goodhead I."/>
            <person name="Muzny D.M."/>
            <person name="Mourier T."/>
            <person name="Pain A."/>
            <person name="Lu M."/>
            <person name="Harper D."/>
            <person name="Lindsay R."/>
            <person name="Hauser H."/>
            <person name="James K.D."/>
            <person name="Quiles M."/>
            <person name="Madan Babu M."/>
            <person name="Saito T."/>
            <person name="Buchrieser C."/>
            <person name="Wardroper A."/>
            <person name="Felder M."/>
            <person name="Thangavelu M."/>
            <person name="Johnson D."/>
            <person name="Knights A."/>
            <person name="Loulseged H."/>
            <person name="Mungall K.L."/>
            <person name="Oliver K."/>
            <person name="Price C."/>
            <person name="Quail M.A."/>
            <person name="Urushihara H."/>
            <person name="Hernandez J."/>
            <person name="Rabbinowitsch E."/>
            <person name="Steffen D."/>
            <person name="Sanders M."/>
            <person name="Ma J."/>
            <person name="Kohara Y."/>
            <person name="Sharp S."/>
            <person name="Simmonds M.N."/>
            <person name="Spiegler S."/>
            <person name="Tivey A."/>
            <person name="Sugano S."/>
            <person name="White B."/>
            <person name="Walker D."/>
            <person name="Woodward J.R."/>
            <person name="Winckler T."/>
            <person name="Tanaka Y."/>
            <person name="Shaulsky G."/>
            <person name="Schleicher M."/>
            <person name="Weinstock G.M."/>
            <person name="Rosenthal A."/>
            <person name="Cox E.C."/>
            <person name="Chisholm R.L."/>
            <person name="Gibbs R.A."/>
            <person name="Loomis W.F."/>
            <person name="Platzer M."/>
            <person name="Kay R.R."/>
            <person name="Williams J.G."/>
            <person name="Dear P.H."/>
            <person name="Noegel A.A."/>
            <person name="Barrell B.G."/>
            <person name="Kuspa A."/>
        </authorList>
    </citation>
    <scope>NUCLEOTIDE SEQUENCE [LARGE SCALE GENOMIC DNA]</scope>
    <source>
        <strain>AX4</strain>
    </source>
</reference>
<evidence type="ECO:0000305" key="1"/>
<keyword id="KW-1185">Reference proteome</keyword>
<name>Y4705_DICDI</name>
<organism>
    <name type="scientific">Dictyostelium discoideum</name>
    <name type="common">Social amoeba</name>
    <dbReference type="NCBI Taxonomy" id="44689"/>
    <lineage>
        <taxon>Eukaryota</taxon>
        <taxon>Amoebozoa</taxon>
        <taxon>Evosea</taxon>
        <taxon>Eumycetozoa</taxon>
        <taxon>Dictyostelia</taxon>
        <taxon>Dictyosteliales</taxon>
        <taxon>Dictyosteliaceae</taxon>
        <taxon>Dictyostelium</taxon>
    </lineage>
</organism>
<comment type="similarity">
    <text evidence="1">Belongs to the GST superfamily.</text>
</comment>
<dbReference type="EMBL" id="AAFI02000012">
    <property type="protein sequence ID" value="EAL70245.2"/>
    <property type="molecule type" value="Genomic_DNA"/>
</dbReference>
<dbReference type="RefSeq" id="XP_644030.3">
    <property type="nucleotide sequence ID" value="XM_638938.2"/>
</dbReference>
<dbReference type="SMR" id="Q555N6"/>
<dbReference type="STRING" id="44689.Q555N6"/>
<dbReference type="PaxDb" id="44689-DDB0304359"/>
<dbReference type="GeneID" id="8619460"/>
<dbReference type="KEGG" id="ddi:DDB_G0274705"/>
<dbReference type="dictyBase" id="DDB_G0274705"/>
<dbReference type="VEuPathDB" id="AmoebaDB:DDB_G0274705"/>
<dbReference type="eggNOG" id="KOG0867">
    <property type="taxonomic scope" value="Eukaryota"/>
</dbReference>
<dbReference type="HOGENOM" id="CLU_011226_14_4_1"/>
<dbReference type="InParanoid" id="Q555N6"/>
<dbReference type="OMA" id="NPWKVIM"/>
<dbReference type="PhylomeDB" id="Q555N6"/>
<dbReference type="PRO" id="PR:Q555N6"/>
<dbReference type="Proteomes" id="UP000002195">
    <property type="component" value="Chromosome 2"/>
</dbReference>
<dbReference type="GO" id="GO:0005737">
    <property type="term" value="C:cytoplasm"/>
    <property type="evidence" value="ECO:0000318"/>
    <property type="project" value="GO_Central"/>
</dbReference>
<dbReference type="GO" id="GO:0004364">
    <property type="term" value="F:glutathione transferase activity"/>
    <property type="evidence" value="ECO:0000318"/>
    <property type="project" value="GO_Central"/>
</dbReference>
<dbReference type="CDD" id="cd03178">
    <property type="entry name" value="GST_C_Ure2p_like"/>
    <property type="match status" value="1"/>
</dbReference>
<dbReference type="Gene3D" id="1.20.1050.10">
    <property type="match status" value="1"/>
</dbReference>
<dbReference type="Gene3D" id="3.40.30.10">
    <property type="entry name" value="Glutaredoxin"/>
    <property type="match status" value="1"/>
</dbReference>
<dbReference type="InterPro" id="IPR010987">
    <property type="entry name" value="Glutathione-S-Trfase_C-like"/>
</dbReference>
<dbReference type="InterPro" id="IPR036282">
    <property type="entry name" value="Glutathione-S-Trfase_C_sf"/>
</dbReference>
<dbReference type="InterPro" id="IPR040079">
    <property type="entry name" value="Glutathione_S-Trfase"/>
</dbReference>
<dbReference type="InterPro" id="IPR004045">
    <property type="entry name" value="Glutathione_S-Trfase_N"/>
</dbReference>
<dbReference type="InterPro" id="IPR004046">
    <property type="entry name" value="GST_C"/>
</dbReference>
<dbReference type="InterPro" id="IPR036249">
    <property type="entry name" value="Thioredoxin-like_sf"/>
</dbReference>
<dbReference type="PANTHER" id="PTHR44051">
    <property type="entry name" value="GLUTATHIONE S-TRANSFERASE-RELATED"/>
    <property type="match status" value="1"/>
</dbReference>
<dbReference type="PANTHER" id="PTHR44051:SF16">
    <property type="entry name" value="GLUTATHIONE S-TRANSFERASE-RELATED"/>
    <property type="match status" value="1"/>
</dbReference>
<dbReference type="Pfam" id="PF00043">
    <property type="entry name" value="GST_C"/>
    <property type="match status" value="1"/>
</dbReference>
<dbReference type="Pfam" id="PF02798">
    <property type="entry name" value="GST_N"/>
    <property type="match status" value="1"/>
</dbReference>
<dbReference type="SFLD" id="SFLDS00019">
    <property type="entry name" value="Glutathione_Transferase_(cytos"/>
    <property type="match status" value="1"/>
</dbReference>
<dbReference type="SFLD" id="SFLDG00358">
    <property type="entry name" value="Main_(cytGST)"/>
    <property type="match status" value="1"/>
</dbReference>
<dbReference type="SUPFAM" id="SSF47616">
    <property type="entry name" value="GST C-terminal domain-like"/>
    <property type="match status" value="1"/>
</dbReference>
<dbReference type="SUPFAM" id="SSF52833">
    <property type="entry name" value="Thioredoxin-like"/>
    <property type="match status" value="1"/>
</dbReference>
<dbReference type="PROSITE" id="PS50405">
    <property type="entry name" value="GST_CTER"/>
    <property type="match status" value="1"/>
</dbReference>
<dbReference type="PROSITE" id="PS50404">
    <property type="entry name" value="GST_NTER"/>
    <property type="match status" value="1"/>
</dbReference>
<accession>Q555N6</accession>
<accession>Q86AU3</accession>
<sequence>MIEINNKIDYIFYTNNTPNTYKIQLILLELQKEYGITFESRFINVFKKENYSDDYIKINPNKKVPAIVDQTGEKPFIVFESVSILIYLAQKFNTFLPDFKTNPLENSEVITWTVWQAANLGPAFGQYFHFSFFSPTVQEYSLHRFNNEAQRILRLLDDRLSSTYIGGNEFSIADIASAGWLLYLNSAPLYNATKERFPNIFKWLDLINQRESIKQVNQSISDGFKNFNPSLLRALFTNDPELINAKAPIGIENVILKYD</sequence>
<proteinExistence type="inferred from homology"/>
<protein>
    <recommendedName>
        <fullName>Glutathione S-transferase domain-containing protein DDB_G0274705</fullName>
    </recommendedName>
</protein>
<feature type="chain" id="PRO_0000363846" description="Glutathione S-transferase domain-containing protein DDB_G0274705">
    <location>
        <begin position="1"/>
        <end position="259"/>
    </location>
</feature>
<feature type="domain" description="GST N-terminal">
    <location>
        <begin position="7"/>
        <end position="96"/>
    </location>
</feature>
<feature type="domain" description="GST C-terminal">
    <location>
        <begin position="102"/>
        <end position="232"/>
    </location>
</feature>